<evidence type="ECO:0000250" key="1"/>
<evidence type="ECO:0000250" key="2">
    <source>
        <dbReference type="UniProtKB" id="Q9NV70"/>
    </source>
</evidence>
<evidence type="ECO:0000255" key="3"/>
<evidence type="ECO:0000256" key="4">
    <source>
        <dbReference type="SAM" id="MobiDB-lite"/>
    </source>
</evidence>
<evidence type="ECO:0000305" key="5"/>
<name>EXOC1_DICDI</name>
<proteinExistence type="inferred from homology"/>
<protein>
    <recommendedName>
        <fullName>Exocyst complex component 1</fullName>
    </recommendedName>
    <alternativeName>
        <fullName>Exocyst complex component Sec3</fullName>
    </alternativeName>
</protein>
<sequence length="879" mass="100175">MDHLGYSGGISRVGIQHNRYSGQFSDRYSQYSESEYDPSETTHSESDSENHHHSNIPILEYPSFLSQSNDNVSNGPSNNTLSSSATSLGNNDGDEDLENVINNYLSFEKDVDILTERLGKTLSTLETEMIVGVLDSGVGVNEVISQLGDKDGTHLTGVTAWIEYYNKQLQDMKKYIEHIEGKNNKMEIVSRNQKLLYSELNNLIGLMTLSDNTISTLTAPQFNDTKGLKMAIEAAEDLKRALTTKLKSGMDNMMAVKDQRKVFETYKISFARKVAALVENIFKTTDKEIGKHVITTTSQTPGEEKFPDYLEYYDLLRKFKPLVNWLKEMDHEKLIPLIVSYIKAFRRIYESDIKLFFSTIQQSLEKESKDQNDFFSSSSSSKKSIDSLNNNTSTSTPSKNSSSSSSSSSGKDGIKKRKINRLFKYALSCLEIYIMTKQNFVMDFFLYQDPPRLAGQRNHHSNSSGGGSGSNKDGKDRKDKKSSKKDKKDKKDKKDKKDKKKKDPDSSSSPSLDNDKPIDSNSPKSPNNAVNGSLSSTEESSPPPPPPPPPKESPDAPLDLILSAMFNGVVPELINMVEKADQVNPFYLLTMLLETELYIDAHSRKDSHHSSYFVKILAEVQKSIKTLFNKFLEVQVDAIKSTQTSLKRCGVLPHFRNFHIFVKELQKYKSESDTGSSTLLIESSYKKIILELFNWLDGLVEKLPEDKKYKFISKLENHYFFYLKLQELNINCLTQHKDTSQSIFKENLEIYVNFLIDLKFKPLIEYYTKMDELLLTLPPSDIQFQQSHSKQQFKKIVEKFKTENIEKGLLKALGNVQKNITKDSQLILVIWERLEEVFIEKYEHFQDITSDCYNQTMPVSSDQIKGIFGTVYKKNPNKH</sequence>
<reference key="1">
    <citation type="journal article" date="2005" name="Nature">
        <title>The genome of the social amoeba Dictyostelium discoideum.</title>
        <authorList>
            <person name="Eichinger L."/>
            <person name="Pachebat J.A."/>
            <person name="Gloeckner G."/>
            <person name="Rajandream M.A."/>
            <person name="Sucgang R."/>
            <person name="Berriman M."/>
            <person name="Song J."/>
            <person name="Olsen R."/>
            <person name="Szafranski K."/>
            <person name="Xu Q."/>
            <person name="Tunggal B."/>
            <person name="Kummerfeld S."/>
            <person name="Madera M."/>
            <person name="Konfortov B.A."/>
            <person name="Rivero F."/>
            <person name="Bankier A.T."/>
            <person name="Lehmann R."/>
            <person name="Hamlin N."/>
            <person name="Davies R."/>
            <person name="Gaudet P."/>
            <person name="Fey P."/>
            <person name="Pilcher K."/>
            <person name="Chen G."/>
            <person name="Saunders D."/>
            <person name="Sodergren E.J."/>
            <person name="Davis P."/>
            <person name="Kerhornou A."/>
            <person name="Nie X."/>
            <person name="Hall N."/>
            <person name="Anjard C."/>
            <person name="Hemphill L."/>
            <person name="Bason N."/>
            <person name="Farbrother P."/>
            <person name="Desany B."/>
            <person name="Just E."/>
            <person name="Morio T."/>
            <person name="Rost R."/>
            <person name="Churcher C.M."/>
            <person name="Cooper J."/>
            <person name="Haydock S."/>
            <person name="van Driessche N."/>
            <person name="Cronin A."/>
            <person name="Goodhead I."/>
            <person name="Muzny D.M."/>
            <person name="Mourier T."/>
            <person name="Pain A."/>
            <person name="Lu M."/>
            <person name="Harper D."/>
            <person name="Lindsay R."/>
            <person name="Hauser H."/>
            <person name="James K.D."/>
            <person name="Quiles M."/>
            <person name="Madan Babu M."/>
            <person name="Saito T."/>
            <person name="Buchrieser C."/>
            <person name="Wardroper A."/>
            <person name="Felder M."/>
            <person name="Thangavelu M."/>
            <person name="Johnson D."/>
            <person name="Knights A."/>
            <person name="Loulseged H."/>
            <person name="Mungall K.L."/>
            <person name="Oliver K."/>
            <person name="Price C."/>
            <person name="Quail M.A."/>
            <person name="Urushihara H."/>
            <person name="Hernandez J."/>
            <person name="Rabbinowitsch E."/>
            <person name="Steffen D."/>
            <person name="Sanders M."/>
            <person name="Ma J."/>
            <person name="Kohara Y."/>
            <person name="Sharp S."/>
            <person name="Simmonds M.N."/>
            <person name="Spiegler S."/>
            <person name="Tivey A."/>
            <person name="Sugano S."/>
            <person name="White B."/>
            <person name="Walker D."/>
            <person name="Woodward J.R."/>
            <person name="Winckler T."/>
            <person name="Tanaka Y."/>
            <person name="Shaulsky G."/>
            <person name="Schleicher M."/>
            <person name="Weinstock G.M."/>
            <person name="Rosenthal A."/>
            <person name="Cox E.C."/>
            <person name="Chisholm R.L."/>
            <person name="Gibbs R.A."/>
            <person name="Loomis W.F."/>
            <person name="Platzer M."/>
            <person name="Kay R.R."/>
            <person name="Williams J.G."/>
            <person name="Dear P.H."/>
            <person name="Noegel A.A."/>
            <person name="Barrell B.G."/>
            <person name="Kuspa A."/>
        </authorList>
    </citation>
    <scope>NUCLEOTIDE SEQUENCE [LARGE SCALE GENOMIC DNA]</scope>
    <source>
        <strain>AX4</strain>
    </source>
</reference>
<organism>
    <name type="scientific">Dictyostelium discoideum</name>
    <name type="common">Social amoeba</name>
    <dbReference type="NCBI Taxonomy" id="44689"/>
    <lineage>
        <taxon>Eukaryota</taxon>
        <taxon>Amoebozoa</taxon>
        <taxon>Evosea</taxon>
        <taxon>Eumycetozoa</taxon>
        <taxon>Dictyostelia</taxon>
        <taxon>Dictyosteliales</taxon>
        <taxon>Dictyosteliaceae</taxon>
        <taxon>Dictyostelium</taxon>
    </lineage>
</organism>
<dbReference type="EMBL" id="AAFI02000073">
    <property type="protein sequence ID" value="EAL64997.1"/>
    <property type="molecule type" value="Genomic_DNA"/>
</dbReference>
<dbReference type="RefSeq" id="XP_639966.1">
    <property type="nucleotide sequence ID" value="XM_634874.1"/>
</dbReference>
<dbReference type="FunCoup" id="Q54NV1">
    <property type="interactions" value="476"/>
</dbReference>
<dbReference type="STRING" id="44689.Q54NV1"/>
<dbReference type="GlyGen" id="Q54NV1">
    <property type="glycosylation" value="1 site"/>
</dbReference>
<dbReference type="PaxDb" id="44689-DDB0233960"/>
<dbReference type="EnsemblProtists" id="EAL64997">
    <property type="protein sequence ID" value="EAL64997"/>
    <property type="gene ID" value="DDB_G0285067"/>
</dbReference>
<dbReference type="GeneID" id="8624877"/>
<dbReference type="KEGG" id="ddi:DDB_G0285067"/>
<dbReference type="dictyBase" id="DDB_G0285067">
    <property type="gene designation" value="exoc1"/>
</dbReference>
<dbReference type="VEuPathDB" id="AmoebaDB:DDB_G0285067"/>
<dbReference type="eggNOG" id="KOG2148">
    <property type="taxonomic scope" value="Eukaryota"/>
</dbReference>
<dbReference type="HOGENOM" id="CLU_327459_0_0_1"/>
<dbReference type="InParanoid" id="Q54NV1"/>
<dbReference type="OMA" id="NQHVMSA"/>
<dbReference type="PhylomeDB" id="Q54NV1"/>
<dbReference type="Reactome" id="R-DDI-264876">
    <property type="pathway name" value="Insulin processing"/>
</dbReference>
<dbReference type="PRO" id="PR:Q54NV1"/>
<dbReference type="Proteomes" id="UP000002195">
    <property type="component" value="Chromosome 4"/>
</dbReference>
<dbReference type="GO" id="GO:0000145">
    <property type="term" value="C:exocyst"/>
    <property type="evidence" value="ECO:0000318"/>
    <property type="project" value="GO_Central"/>
</dbReference>
<dbReference type="GO" id="GO:0090543">
    <property type="term" value="C:Flemming body"/>
    <property type="evidence" value="ECO:0007669"/>
    <property type="project" value="UniProtKB-SubCell"/>
</dbReference>
<dbReference type="GO" id="GO:0005886">
    <property type="term" value="C:plasma membrane"/>
    <property type="evidence" value="ECO:0000318"/>
    <property type="project" value="GO_Central"/>
</dbReference>
<dbReference type="GO" id="GO:0005546">
    <property type="term" value="F:phosphatidylinositol-4,5-bisphosphate binding"/>
    <property type="evidence" value="ECO:0000318"/>
    <property type="project" value="GO_Central"/>
</dbReference>
<dbReference type="GO" id="GO:0006887">
    <property type="term" value="P:exocytosis"/>
    <property type="evidence" value="ECO:0000318"/>
    <property type="project" value="GO_Central"/>
</dbReference>
<dbReference type="GO" id="GO:0006893">
    <property type="term" value="P:Golgi to plasma membrane transport"/>
    <property type="evidence" value="ECO:0000318"/>
    <property type="project" value="GO_Central"/>
</dbReference>
<dbReference type="GO" id="GO:0015031">
    <property type="term" value="P:protein transport"/>
    <property type="evidence" value="ECO:0007669"/>
    <property type="project" value="UniProtKB-KW"/>
</dbReference>
<dbReference type="InterPro" id="IPR048628">
    <property type="entry name" value="Sec3_C"/>
</dbReference>
<dbReference type="InterPro" id="IPR019160">
    <property type="entry name" value="Sec3_CC"/>
</dbReference>
<dbReference type="PANTHER" id="PTHR16092:SF14">
    <property type="entry name" value="EXOCYST COMPLEX COMPONENT 1 ISOFORM X1"/>
    <property type="match status" value="1"/>
</dbReference>
<dbReference type="PANTHER" id="PTHR16092">
    <property type="entry name" value="SEC3/SYNTAXIN-RELATED"/>
    <property type="match status" value="1"/>
</dbReference>
<dbReference type="Pfam" id="PF20654">
    <property type="entry name" value="Sec3_C-term"/>
    <property type="match status" value="1"/>
</dbReference>
<dbReference type="Pfam" id="PF09763">
    <property type="entry name" value="Sec3_CC"/>
    <property type="match status" value="1"/>
</dbReference>
<gene>
    <name type="primary">exoc1</name>
    <name type="synonym">sec3</name>
    <name type="ORF">DDB_G0285067</name>
</gene>
<comment type="function">
    <text evidence="1">Component of the exocyst complex involved in the docking of exocytic vesicles with fusion sites on the plasma membrane.</text>
</comment>
<comment type="subunit">
    <text evidence="1">The exocyst complex is composed of sec3/exoc1, sec5/exoc2, sec6/exoc3, sec8/exoc4, sec10/exoc5, sec15/exoc6, exo70/exoc7 and exo84/exoc8.</text>
</comment>
<comment type="subcellular location">
    <subcellularLocation>
        <location evidence="2">Midbody</location>
        <location evidence="2">Midbody ring</location>
    </subcellularLocation>
</comment>
<comment type="similarity">
    <text evidence="5">Belongs to the SEC3 family.</text>
</comment>
<keyword id="KW-0175">Coiled coil</keyword>
<keyword id="KW-0268">Exocytosis</keyword>
<keyword id="KW-0653">Protein transport</keyword>
<keyword id="KW-1185">Reference proteome</keyword>
<keyword id="KW-0813">Transport</keyword>
<feature type="chain" id="PRO_0000329039" description="Exocyst complex component 1">
    <location>
        <begin position="1"/>
        <end position="879"/>
    </location>
</feature>
<feature type="region of interest" description="Disordered" evidence="4">
    <location>
        <begin position="29"/>
        <end position="94"/>
    </location>
</feature>
<feature type="region of interest" description="Disordered" evidence="4">
    <location>
        <begin position="371"/>
        <end position="413"/>
    </location>
</feature>
<feature type="region of interest" description="Disordered" evidence="4">
    <location>
        <begin position="455"/>
        <end position="557"/>
    </location>
</feature>
<feature type="coiled-coil region" evidence="3">
    <location>
        <begin position="165"/>
        <end position="187"/>
    </location>
</feature>
<feature type="coiled-coil region" evidence="3">
    <location>
        <begin position="226"/>
        <end position="248"/>
    </location>
</feature>
<feature type="compositionally biased region" description="Basic and acidic residues" evidence="4">
    <location>
        <begin position="40"/>
        <end position="52"/>
    </location>
</feature>
<feature type="compositionally biased region" description="Polar residues" evidence="4">
    <location>
        <begin position="64"/>
        <end position="76"/>
    </location>
</feature>
<feature type="compositionally biased region" description="Low complexity" evidence="4">
    <location>
        <begin position="77"/>
        <end position="91"/>
    </location>
</feature>
<feature type="compositionally biased region" description="Low complexity" evidence="4">
    <location>
        <begin position="373"/>
        <end position="409"/>
    </location>
</feature>
<feature type="compositionally biased region" description="Basic residues" evidence="4">
    <location>
        <begin position="480"/>
        <end position="500"/>
    </location>
</feature>
<feature type="compositionally biased region" description="Polar residues" evidence="4">
    <location>
        <begin position="519"/>
        <end position="532"/>
    </location>
</feature>
<feature type="compositionally biased region" description="Pro residues" evidence="4">
    <location>
        <begin position="541"/>
        <end position="551"/>
    </location>
</feature>
<accession>Q54NV1</accession>